<evidence type="ECO:0000255" key="1">
    <source>
        <dbReference type="HAMAP-Rule" id="MF_01351"/>
    </source>
</evidence>
<comment type="function">
    <text evidence="1">NDH-1 shuttles electrons from an unknown electron donor, via FMN and iron-sulfur (Fe-S) centers, to quinones in the respiratory and/or the photosynthetic chain. The immediate electron acceptor for the enzyme in this species is believed to be plastoquinone. Couples the redox reaction to proton translocation, and thus conserves the redox energy in a proton gradient.</text>
</comment>
<comment type="catalytic activity">
    <reaction evidence="1">
        <text>a plastoquinone + NADH + (n+1) H(+)(in) = a plastoquinol + NAD(+) + n H(+)(out)</text>
        <dbReference type="Rhea" id="RHEA:42608"/>
        <dbReference type="Rhea" id="RHEA-COMP:9561"/>
        <dbReference type="Rhea" id="RHEA-COMP:9562"/>
        <dbReference type="ChEBI" id="CHEBI:15378"/>
        <dbReference type="ChEBI" id="CHEBI:17757"/>
        <dbReference type="ChEBI" id="CHEBI:57540"/>
        <dbReference type="ChEBI" id="CHEBI:57945"/>
        <dbReference type="ChEBI" id="CHEBI:62192"/>
    </reaction>
</comment>
<comment type="catalytic activity">
    <reaction evidence="1">
        <text>a plastoquinone + NADPH + (n+1) H(+)(in) = a plastoquinol + NADP(+) + n H(+)(out)</text>
        <dbReference type="Rhea" id="RHEA:42612"/>
        <dbReference type="Rhea" id="RHEA-COMP:9561"/>
        <dbReference type="Rhea" id="RHEA-COMP:9562"/>
        <dbReference type="ChEBI" id="CHEBI:15378"/>
        <dbReference type="ChEBI" id="CHEBI:17757"/>
        <dbReference type="ChEBI" id="CHEBI:57783"/>
        <dbReference type="ChEBI" id="CHEBI:58349"/>
        <dbReference type="ChEBI" id="CHEBI:62192"/>
    </reaction>
</comment>
<comment type="cofactor">
    <cofactor evidence="1">
        <name>[4Fe-4S] cluster</name>
        <dbReference type="ChEBI" id="CHEBI:49883"/>
    </cofactor>
    <text evidence="1">Binds 2 [4Fe-4S] clusters per subunit.</text>
</comment>
<comment type="subunit">
    <text evidence="1">NDH-1 is composed of at least 11 different subunits.</text>
</comment>
<comment type="subcellular location">
    <subcellularLocation>
        <location evidence="1">Cellular thylakoid membrane</location>
        <topology evidence="1">Peripheral membrane protein</topology>
    </subcellularLocation>
</comment>
<comment type="similarity">
    <text evidence="1">Belongs to the complex I 23 kDa subunit family.</text>
</comment>
<sequence>MFKFLKQVSDYAKETFQSAKYIGQGLSVTFDHMSRRPVTVQYPYEKLIPSERFRGRIHFEYDKCIACEVCVRVCPINLPVVDWEFNKETKKKKLKHYSIDFGVCIFCGNCVEYCPSNCLSMTEEYELAAYDRHELNYDNVALGRLPYKVTNDPMVTPMRELAYLPKGVIDPHTVPHTSRRAGLRPEEILEQIEAEKTAAEKTAAEITDK</sequence>
<organism>
    <name type="scientific">Trichodesmium erythraeum (strain IMS101)</name>
    <dbReference type="NCBI Taxonomy" id="203124"/>
    <lineage>
        <taxon>Bacteria</taxon>
        <taxon>Bacillati</taxon>
        <taxon>Cyanobacteriota</taxon>
        <taxon>Cyanophyceae</taxon>
        <taxon>Oscillatoriophycideae</taxon>
        <taxon>Oscillatoriales</taxon>
        <taxon>Microcoleaceae</taxon>
        <taxon>Trichodesmium</taxon>
    </lineage>
</organism>
<feature type="chain" id="PRO_0000298557" description="NAD(P)H-quinone oxidoreductase subunit I">
    <location>
        <begin position="1"/>
        <end position="209"/>
    </location>
</feature>
<feature type="domain" description="4Fe-4S ferredoxin-type 1" evidence="1">
    <location>
        <begin position="55"/>
        <end position="84"/>
    </location>
</feature>
<feature type="domain" description="4Fe-4S ferredoxin-type 2" evidence="1">
    <location>
        <begin position="95"/>
        <end position="124"/>
    </location>
</feature>
<feature type="binding site" evidence="1">
    <location>
        <position position="64"/>
    </location>
    <ligand>
        <name>[4Fe-4S] cluster</name>
        <dbReference type="ChEBI" id="CHEBI:49883"/>
        <label>1</label>
    </ligand>
</feature>
<feature type="binding site" evidence="1">
    <location>
        <position position="67"/>
    </location>
    <ligand>
        <name>[4Fe-4S] cluster</name>
        <dbReference type="ChEBI" id="CHEBI:49883"/>
        <label>1</label>
    </ligand>
</feature>
<feature type="binding site" evidence="1">
    <location>
        <position position="70"/>
    </location>
    <ligand>
        <name>[4Fe-4S] cluster</name>
        <dbReference type="ChEBI" id="CHEBI:49883"/>
        <label>1</label>
    </ligand>
</feature>
<feature type="binding site" evidence="1">
    <location>
        <position position="74"/>
    </location>
    <ligand>
        <name>[4Fe-4S] cluster</name>
        <dbReference type="ChEBI" id="CHEBI:49883"/>
        <label>2</label>
    </ligand>
</feature>
<feature type="binding site" evidence="1">
    <location>
        <position position="104"/>
    </location>
    <ligand>
        <name>[4Fe-4S] cluster</name>
        <dbReference type="ChEBI" id="CHEBI:49883"/>
        <label>2</label>
    </ligand>
</feature>
<feature type="binding site" evidence="1">
    <location>
        <position position="107"/>
    </location>
    <ligand>
        <name>[4Fe-4S] cluster</name>
        <dbReference type="ChEBI" id="CHEBI:49883"/>
        <label>2</label>
    </ligand>
</feature>
<feature type="binding site" evidence="1">
    <location>
        <position position="110"/>
    </location>
    <ligand>
        <name>[4Fe-4S] cluster</name>
        <dbReference type="ChEBI" id="CHEBI:49883"/>
        <label>2</label>
    </ligand>
</feature>
<feature type="binding site" evidence="1">
    <location>
        <position position="114"/>
    </location>
    <ligand>
        <name>[4Fe-4S] cluster</name>
        <dbReference type="ChEBI" id="CHEBI:49883"/>
        <label>1</label>
    </ligand>
</feature>
<name>NDHI_TRIEI</name>
<keyword id="KW-0004">4Fe-4S</keyword>
<keyword id="KW-0408">Iron</keyword>
<keyword id="KW-0411">Iron-sulfur</keyword>
<keyword id="KW-0472">Membrane</keyword>
<keyword id="KW-0479">Metal-binding</keyword>
<keyword id="KW-0520">NAD</keyword>
<keyword id="KW-0521">NADP</keyword>
<keyword id="KW-0618">Plastoquinone</keyword>
<keyword id="KW-0874">Quinone</keyword>
<keyword id="KW-0677">Repeat</keyword>
<keyword id="KW-0793">Thylakoid</keyword>
<keyword id="KW-1278">Translocase</keyword>
<accession>Q115G6</accession>
<proteinExistence type="inferred from homology"/>
<protein>
    <recommendedName>
        <fullName evidence="1">NAD(P)H-quinone oxidoreductase subunit I</fullName>
        <ecNumber evidence="1">7.1.1.-</ecNumber>
    </recommendedName>
    <alternativeName>
        <fullName evidence="1">NAD(P)H dehydrogenase I subunit I</fullName>
    </alternativeName>
    <alternativeName>
        <fullName evidence="1">NDH-1 subunit I</fullName>
        <shortName evidence="1">NDH-I</shortName>
    </alternativeName>
</protein>
<dbReference type="EC" id="7.1.1.-" evidence="1"/>
<dbReference type="EMBL" id="CP000393">
    <property type="protein sequence ID" value="ABG50858.1"/>
    <property type="molecule type" value="Genomic_DNA"/>
</dbReference>
<dbReference type="RefSeq" id="WP_011611234.1">
    <property type="nucleotide sequence ID" value="NC_008312.1"/>
</dbReference>
<dbReference type="SMR" id="Q115G6"/>
<dbReference type="STRING" id="203124.Tery_1578"/>
<dbReference type="KEGG" id="ter:Tery_1578"/>
<dbReference type="eggNOG" id="COG1143">
    <property type="taxonomic scope" value="Bacteria"/>
</dbReference>
<dbReference type="HOGENOM" id="CLU_122804_0_0_3"/>
<dbReference type="OrthoDB" id="9798098at2"/>
<dbReference type="GO" id="GO:0031676">
    <property type="term" value="C:plasma membrane-derived thylakoid membrane"/>
    <property type="evidence" value="ECO:0007669"/>
    <property type="project" value="UniProtKB-SubCell"/>
</dbReference>
<dbReference type="GO" id="GO:0051539">
    <property type="term" value="F:4 iron, 4 sulfur cluster binding"/>
    <property type="evidence" value="ECO:0007669"/>
    <property type="project" value="UniProtKB-KW"/>
</dbReference>
<dbReference type="GO" id="GO:0005506">
    <property type="term" value="F:iron ion binding"/>
    <property type="evidence" value="ECO:0007669"/>
    <property type="project" value="UniProtKB-UniRule"/>
</dbReference>
<dbReference type="GO" id="GO:0008137">
    <property type="term" value="F:NADH dehydrogenase (ubiquinone) activity"/>
    <property type="evidence" value="ECO:0007669"/>
    <property type="project" value="InterPro"/>
</dbReference>
<dbReference type="GO" id="GO:0048038">
    <property type="term" value="F:quinone binding"/>
    <property type="evidence" value="ECO:0007669"/>
    <property type="project" value="UniProtKB-KW"/>
</dbReference>
<dbReference type="GO" id="GO:0019684">
    <property type="term" value="P:photosynthesis, light reaction"/>
    <property type="evidence" value="ECO:0007669"/>
    <property type="project" value="UniProtKB-UniRule"/>
</dbReference>
<dbReference type="Gene3D" id="3.30.70.3270">
    <property type="match status" value="1"/>
</dbReference>
<dbReference type="HAMAP" id="MF_01351">
    <property type="entry name" value="NDH1_NuoI"/>
    <property type="match status" value="1"/>
</dbReference>
<dbReference type="InterPro" id="IPR017896">
    <property type="entry name" value="4Fe4S_Fe-S-bd"/>
</dbReference>
<dbReference type="InterPro" id="IPR017900">
    <property type="entry name" value="4Fe4S_Fe_S_CS"/>
</dbReference>
<dbReference type="InterPro" id="IPR010226">
    <property type="entry name" value="NADH_quinone_OxRdtase_chainI"/>
</dbReference>
<dbReference type="InterPro" id="IPR004497">
    <property type="entry name" value="NDHI"/>
</dbReference>
<dbReference type="NCBIfam" id="TIGR00403">
    <property type="entry name" value="ndhI"/>
    <property type="match status" value="1"/>
</dbReference>
<dbReference type="NCBIfam" id="TIGR01971">
    <property type="entry name" value="NuoI"/>
    <property type="match status" value="1"/>
</dbReference>
<dbReference type="NCBIfam" id="NF004537">
    <property type="entry name" value="PRK05888.1-3"/>
    <property type="match status" value="1"/>
</dbReference>
<dbReference type="PANTHER" id="PTHR47275">
    <property type="entry name" value="NAD(P)H-QUINONE OXIDOREDUCTASE SUBUNIT I, CHLOROPLASTIC"/>
    <property type="match status" value="1"/>
</dbReference>
<dbReference type="PANTHER" id="PTHR47275:SF1">
    <property type="entry name" value="NAD(P)H-QUINONE OXIDOREDUCTASE SUBUNIT I, CHLOROPLASTIC"/>
    <property type="match status" value="1"/>
</dbReference>
<dbReference type="Pfam" id="PF12838">
    <property type="entry name" value="Fer4_7"/>
    <property type="match status" value="1"/>
</dbReference>
<dbReference type="SUPFAM" id="SSF54862">
    <property type="entry name" value="4Fe-4S ferredoxins"/>
    <property type="match status" value="1"/>
</dbReference>
<dbReference type="PROSITE" id="PS00198">
    <property type="entry name" value="4FE4S_FER_1"/>
    <property type="match status" value="2"/>
</dbReference>
<dbReference type="PROSITE" id="PS51379">
    <property type="entry name" value="4FE4S_FER_2"/>
    <property type="match status" value="2"/>
</dbReference>
<gene>
    <name evidence="1" type="primary">ndhI</name>
    <name type="ordered locus">Tery_1578</name>
</gene>
<reference key="1">
    <citation type="journal article" date="2015" name="Proc. Natl. Acad. Sci. U.S.A.">
        <title>Trichodesmium genome maintains abundant, widespread noncoding DNA in situ, despite oligotrophic lifestyle.</title>
        <authorList>
            <person name="Walworth N."/>
            <person name="Pfreundt U."/>
            <person name="Nelson W.C."/>
            <person name="Mincer T."/>
            <person name="Heidelberg J.F."/>
            <person name="Fu F."/>
            <person name="Waterbury J.B."/>
            <person name="Glavina del Rio T."/>
            <person name="Goodwin L."/>
            <person name="Kyrpides N.C."/>
            <person name="Land M.L."/>
            <person name="Woyke T."/>
            <person name="Hutchins D.A."/>
            <person name="Hess W.R."/>
            <person name="Webb E.A."/>
        </authorList>
    </citation>
    <scope>NUCLEOTIDE SEQUENCE [LARGE SCALE GENOMIC DNA]</scope>
    <source>
        <strain>IMS101</strain>
    </source>
</reference>